<organism>
    <name type="scientific">Dictyostelium discoideum</name>
    <name type="common">Social amoeba</name>
    <dbReference type="NCBI Taxonomy" id="44689"/>
    <lineage>
        <taxon>Eukaryota</taxon>
        <taxon>Amoebozoa</taxon>
        <taxon>Evosea</taxon>
        <taxon>Eumycetozoa</taxon>
        <taxon>Dictyostelia</taxon>
        <taxon>Dictyosteliales</taxon>
        <taxon>Dictyosteliaceae</taxon>
        <taxon>Dictyostelium</taxon>
    </lineage>
</organism>
<feature type="chain" id="PRO_0000380224" description="GTPase activating protein homolog 1">
    <location>
        <begin position="1"/>
        <end position="920"/>
    </location>
</feature>
<feature type="domain" description="F-BAR" evidence="4">
    <location>
        <begin position="90"/>
        <end position="344"/>
    </location>
</feature>
<feature type="domain" description="Rho-GAP" evidence="3">
    <location>
        <begin position="533"/>
        <end position="716"/>
    </location>
</feature>
<feature type="region of interest" description="Disordered" evidence="5">
    <location>
        <begin position="65"/>
        <end position="91"/>
    </location>
</feature>
<feature type="region of interest" description="Disordered" evidence="5">
    <location>
        <begin position="403"/>
        <end position="468"/>
    </location>
</feature>
<feature type="region of interest" description="Disordered" evidence="5">
    <location>
        <begin position="490"/>
        <end position="518"/>
    </location>
</feature>
<feature type="region of interest" description="Disordered" evidence="5">
    <location>
        <begin position="727"/>
        <end position="836"/>
    </location>
</feature>
<feature type="coiled-coil region" evidence="2">
    <location>
        <begin position="184"/>
        <end position="276"/>
    </location>
</feature>
<feature type="compositionally biased region" description="Low complexity" evidence="5">
    <location>
        <begin position="65"/>
        <end position="87"/>
    </location>
</feature>
<feature type="compositionally biased region" description="Low complexity" evidence="5">
    <location>
        <begin position="403"/>
        <end position="449"/>
    </location>
</feature>
<feature type="compositionally biased region" description="Polar residues" evidence="5">
    <location>
        <begin position="450"/>
        <end position="468"/>
    </location>
</feature>
<feature type="compositionally biased region" description="Low complexity" evidence="5">
    <location>
        <begin position="490"/>
        <end position="513"/>
    </location>
</feature>
<feature type="compositionally biased region" description="Acidic residues" evidence="5">
    <location>
        <begin position="730"/>
        <end position="741"/>
    </location>
</feature>
<feature type="compositionally biased region" description="Low complexity" evidence="5">
    <location>
        <begin position="757"/>
        <end position="836"/>
    </location>
</feature>
<feature type="site" description="Arginine finger; crucial for GTP hydrolysis by stabilizing the transition state" evidence="3">
    <location>
        <position position="579"/>
    </location>
</feature>
<sequence>MNVENQDPNIMVIPNNNLGPIDGNNISPAMNDENSNNGSSFLKNLVNTGTNLLFSSSSSIASPPNLGGLSNDSTNNNSNSNNTIDSSKPLSFENDMSDGYEALVRRSEIAIDQCKELLDFFKKRASEEEKYSKNISNMFSKFKVKDDHDTFQKGVSLLNKINDAESTIHRSFSQNITTNLYHPLNEAIKDMEKSRKRLLEDGKKLKNDLKDSIENVKKSNQKYEKLCREMEQAKLELIEEGNDTKSGKVETLEKKLEKTKLASIKAEDEYKEQINETNEFISGVYQNRLSENLREFQQFELTRLEIMKSNIRNYIGFMKDIPQALQCEIDSTKGFVDIIDPEVDLQNYIMNNSNPKKVLLPFIFEAYNDHKPFVDQHNQNSSSSSSTNALNYASPMSASGSITNTITSQSGSTIISNGASQPIEIPSPQPISEQQQIPPQQQQQQQQAQVPPTSINQSSSPPVNPMGRQQSLKENIFGFFNKATTNLKSSTSSLLTKDGNSTTSSNTSTSNSNQLSKSGIGLPIINTNSIFGVELEVLIENDNSKKKGNGVELEVPLILTQFVQALLKLESFKMDGVFVSLPSHFNIQQEKQKLDQTGTLENITDVYLIASLFKNWIGDLPNPLISYAIYQEIIEAPDNAWKIIESGIPILHRRVLHYIIDFLVDFVNCSKMDTHSISLIFTPVLIRSPFNGDSLLNSKKEVAVIENMIIDSLETKRGNYILKRNLPIIPDDENSDDDDDDSGHIDDENNSSTSGENDINTTNINNNNNVNSNNDTNNNNNNSNTTTTNNNNNNDSNNSNSTNNNNNNNNNNTNNDDNESNNSGYGVSSNGNNINSSVGGSVTHHFLYQTTPTNNVTPVLSDFFDTNSSNGSSKANTNTHNLGVRNSSNISFDTISTNQSDSEPVLVEYDNDDFDILSYK</sequence>
<comment type="function">
    <text evidence="1 6">Rho GTPase-activating protein involved in the signal transduction pathway (By similarity). Regulator of the contractile vacuole network as well as involved in driving vacuole emptying.</text>
</comment>
<comment type="subcellular location">
    <subcellularLocation>
        <location evidence="6">Cytoplasm</location>
    </subcellularLocation>
    <subcellularLocation>
        <location evidence="6">Contractile vacuole</location>
    </subcellularLocation>
    <text>Localized to tubules of the contractile network.</text>
</comment>
<comment type="disruption phenotype">
    <text evidence="6">Show a strong cytoskeletal phenotype. mgp1-/mgp2- cells have a severe fruiting defect, an overabundance of filopodia and slug motility and function are affected. They empty their contractile vacuoles less efficiently than normal and consequently they have three times the usual number.</text>
</comment>
<keyword id="KW-0175">Coiled coil</keyword>
<keyword id="KW-0963">Cytoplasm</keyword>
<keyword id="KW-0343">GTPase activation</keyword>
<keyword id="KW-1185">Reference proteome</keyword>
<keyword id="KW-0926">Vacuole</keyword>
<protein>
    <recommendedName>
        <fullName>GTPase activating protein homolog 1</fullName>
    </recommendedName>
    <alternativeName>
        <fullName>GTPase activating factor for raC protein BB</fullName>
    </alternativeName>
    <alternativeName>
        <fullName>Rho GTPase-activating protein gacBB</fullName>
    </alternativeName>
</protein>
<name>MGP1_DICDI</name>
<evidence type="ECO:0000250" key="1"/>
<evidence type="ECO:0000255" key="2"/>
<evidence type="ECO:0000255" key="3">
    <source>
        <dbReference type="PROSITE-ProRule" id="PRU00172"/>
    </source>
</evidence>
<evidence type="ECO:0000255" key="4">
    <source>
        <dbReference type="PROSITE-ProRule" id="PRU01077"/>
    </source>
</evidence>
<evidence type="ECO:0000256" key="5">
    <source>
        <dbReference type="SAM" id="MobiDB-lite"/>
    </source>
</evidence>
<evidence type="ECO:0000269" key="6">
    <source>
    </source>
</evidence>
<gene>
    <name type="primary">mgp1</name>
    <name type="synonym">gacBB</name>
    <name type="ORF">DDB_G0290233</name>
</gene>
<proteinExistence type="inferred from homology"/>
<reference key="1">
    <citation type="journal article" date="2005" name="Nature">
        <title>The genome of the social amoeba Dictyostelium discoideum.</title>
        <authorList>
            <person name="Eichinger L."/>
            <person name="Pachebat J.A."/>
            <person name="Gloeckner G."/>
            <person name="Rajandream M.A."/>
            <person name="Sucgang R."/>
            <person name="Berriman M."/>
            <person name="Song J."/>
            <person name="Olsen R."/>
            <person name="Szafranski K."/>
            <person name="Xu Q."/>
            <person name="Tunggal B."/>
            <person name="Kummerfeld S."/>
            <person name="Madera M."/>
            <person name="Konfortov B.A."/>
            <person name="Rivero F."/>
            <person name="Bankier A.T."/>
            <person name="Lehmann R."/>
            <person name="Hamlin N."/>
            <person name="Davies R."/>
            <person name="Gaudet P."/>
            <person name="Fey P."/>
            <person name="Pilcher K."/>
            <person name="Chen G."/>
            <person name="Saunders D."/>
            <person name="Sodergren E.J."/>
            <person name="Davis P."/>
            <person name="Kerhornou A."/>
            <person name="Nie X."/>
            <person name="Hall N."/>
            <person name="Anjard C."/>
            <person name="Hemphill L."/>
            <person name="Bason N."/>
            <person name="Farbrother P."/>
            <person name="Desany B."/>
            <person name="Just E."/>
            <person name="Morio T."/>
            <person name="Rost R."/>
            <person name="Churcher C.M."/>
            <person name="Cooper J."/>
            <person name="Haydock S."/>
            <person name="van Driessche N."/>
            <person name="Cronin A."/>
            <person name="Goodhead I."/>
            <person name="Muzny D.M."/>
            <person name="Mourier T."/>
            <person name="Pain A."/>
            <person name="Lu M."/>
            <person name="Harper D."/>
            <person name="Lindsay R."/>
            <person name="Hauser H."/>
            <person name="James K.D."/>
            <person name="Quiles M."/>
            <person name="Madan Babu M."/>
            <person name="Saito T."/>
            <person name="Buchrieser C."/>
            <person name="Wardroper A."/>
            <person name="Felder M."/>
            <person name="Thangavelu M."/>
            <person name="Johnson D."/>
            <person name="Knights A."/>
            <person name="Loulseged H."/>
            <person name="Mungall K.L."/>
            <person name="Oliver K."/>
            <person name="Price C."/>
            <person name="Quail M.A."/>
            <person name="Urushihara H."/>
            <person name="Hernandez J."/>
            <person name="Rabbinowitsch E."/>
            <person name="Steffen D."/>
            <person name="Sanders M."/>
            <person name="Ma J."/>
            <person name="Kohara Y."/>
            <person name="Sharp S."/>
            <person name="Simmonds M.N."/>
            <person name="Spiegler S."/>
            <person name="Tivey A."/>
            <person name="Sugano S."/>
            <person name="White B."/>
            <person name="Walker D."/>
            <person name="Woodward J.R."/>
            <person name="Winckler T."/>
            <person name="Tanaka Y."/>
            <person name="Shaulsky G."/>
            <person name="Schleicher M."/>
            <person name="Weinstock G.M."/>
            <person name="Rosenthal A."/>
            <person name="Cox E.C."/>
            <person name="Chisholm R.L."/>
            <person name="Gibbs R.A."/>
            <person name="Loomis W.F."/>
            <person name="Platzer M."/>
            <person name="Kay R.R."/>
            <person name="Williams J.G."/>
            <person name="Dear P.H."/>
            <person name="Noegel A.A."/>
            <person name="Barrell B.G."/>
            <person name="Kuspa A."/>
        </authorList>
    </citation>
    <scope>NUCLEOTIDE SEQUENCE [LARGE SCALE GENOMIC DNA]</scope>
    <source>
        <strain>AX4</strain>
    </source>
</reference>
<reference key="2">
    <citation type="journal article" date="2008" name="J. Cell Sci.">
        <title>Dictyostelium MEGAPs: F-BAR domain proteins that regulate motility and membrane tubulation in contractile vacuoles.</title>
        <authorList>
            <person name="Heath R.J."/>
            <person name="Insall R.H."/>
        </authorList>
    </citation>
    <scope>DISRUPTION PHENOTYPE</scope>
    <scope>SUBCELLULAR LOCATION</scope>
    <scope>FUNCTION</scope>
</reference>
<dbReference type="EMBL" id="AAFI02000161">
    <property type="protein sequence ID" value="EAL62338.1"/>
    <property type="molecule type" value="Genomic_DNA"/>
</dbReference>
<dbReference type="RefSeq" id="XP_635848.1">
    <property type="nucleotide sequence ID" value="XM_630756.1"/>
</dbReference>
<dbReference type="SMR" id="Q54GD0"/>
<dbReference type="FunCoup" id="Q54GD0">
    <property type="interactions" value="36"/>
</dbReference>
<dbReference type="STRING" id="44689.Q54GD0"/>
<dbReference type="PaxDb" id="44689-DDB0233877"/>
<dbReference type="EnsemblProtists" id="EAL62338">
    <property type="protein sequence ID" value="EAL62338"/>
    <property type="gene ID" value="DDB_G0290233"/>
</dbReference>
<dbReference type="GeneID" id="8627556"/>
<dbReference type="KEGG" id="ddi:DDB_G0290233"/>
<dbReference type="dictyBase" id="DDB_G0290233">
    <property type="gene designation" value="mgp1"/>
</dbReference>
<dbReference type="VEuPathDB" id="AmoebaDB:DDB_G0290233"/>
<dbReference type="eggNOG" id="KOG1453">
    <property type="taxonomic scope" value="Eukaryota"/>
</dbReference>
<dbReference type="eggNOG" id="KOG3565">
    <property type="taxonomic scope" value="Eukaryota"/>
</dbReference>
<dbReference type="HOGENOM" id="CLU_316994_0_0_1"/>
<dbReference type="InParanoid" id="Q54GD0"/>
<dbReference type="OMA" id="NNLCHPF"/>
<dbReference type="PhylomeDB" id="Q54GD0"/>
<dbReference type="Reactome" id="R-DDI-8856828">
    <property type="pathway name" value="Clathrin-mediated endocytosis"/>
</dbReference>
<dbReference type="PRO" id="PR:Q54GD0"/>
<dbReference type="Proteomes" id="UP000002195">
    <property type="component" value="Chromosome 5"/>
</dbReference>
<dbReference type="GO" id="GO:0031164">
    <property type="term" value="C:contractile vacuolar membrane"/>
    <property type="evidence" value="ECO:0000314"/>
    <property type="project" value="dictyBase"/>
</dbReference>
<dbReference type="GO" id="GO:0000331">
    <property type="term" value="C:contractile vacuole"/>
    <property type="evidence" value="ECO:0000314"/>
    <property type="project" value="dictyBase"/>
</dbReference>
<dbReference type="GO" id="GO:0005737">
    <property type="term" value="C:cytoplasm"/>
    <property type="evidence" value="ECO:0000318"/>
    <property type="project" value="GO_Central"/>
</dbReference>
<dbReference type="GO" id="GO:0005829">
    <property type="term" value="C:cytosol"/>
    <property type="evidence" value="ECO:0000314"/>
    <property type="project" value="dictyBase"/>
</dbReference>
<dbReference type="GO" id="GO:0031982">
    <property type="term" value="C:vesicle"/>
    <property type="evidence" value="ECO:0000318"/>
    <property type="project" value="GO_Central"/>
</dbReference>
<dbReference type="GO" id="GO:0005096">
    <property type="term" value="F:GTPase activator activity"/>
    <property type="evidence" value="ECO:0007669"/>
    <property type="project" value="UniProtKB-KW"/>
</dbReference>
<dbReference type="GO" id="GO:0008017">
    <property type="term" value="F:microtubule binding"/>
    <property type="evidence" value="ECO:0000318"/>
    <property type="project" value="GO_Central"/>
</dbReference>
<dbReference type="GO" id="GO:0030041">
    <property type="term" value="P:actin filament polymerization"/>
    <property type="evidence" value="ECO:0000318"/>
    <property type="project" value="GO_Central"/>
</dbReference>
<dbReference type="GO" id="GO:0070177">
    <property type="term" value="P:contractile vacuole discharge"/>
    <property type="evidence" value="ECO:0000304"/>
    <property type="project" value="dictyBase"/>
</dbReference>
<dbReference type="GO" id="GO:0033298">
    <property type="term" value="P:contractile vacuole organization"/>
    <property type="evidence" value="ECO:0000315"/>
    <property type="project" value="dictyBase"/>
</dbReference>
<dbReference type="GO" id="GO:0006887">
    <property type="term" value="P:exocytosis"/>
    <property type="evidence" value="ECO:0000316"/>
    <property type="project" value="dictyBase"/>
</dbReference>
<dbReference type="GO" id="GO:0006971">
    <property type="term" value="P:hypotonic response"/>
    <property type="evidence" value="ECO:0007007"/>
    <property type="project" value="dictyBase"/>
</dbReference>
<dbReference type="GO" id="GO:0051490">
    <property type="term" value="P:negative regulation of filopodium assembly"/>
    <property type="evidence" value="ECO:0000315"/>
    <property type="project" value="dictyBase"/>
</dbReference>
<dbReference type="GO" id="GO:0042331">
    <property type="term" value="P:phototaxis"/>
    <property type="evidence" value="ECO:0000316"/>
    <property type="project" value="dictyBase"/>
</dbReference>
<dbReference type="GO" id="GO:1903013">
    <property type="term" value="P:response to differentiation-inducing factor 1"/>
    <property type="evidence" value="ECO:0007005"/>
    <property type="project" value="dictyBase"/>
</dbReference>
<dbReference type="GO" id="GO:0007165">
    <property type="term" value="P:signal transduction"/>
    <property type="evidence" value="ECO:0007669"/>
    <property type="project" value="InterPro"/>
</dbReference>
<dbReference type="GO" id="GO:0016050">
    <property type="term" value="P:vesicle organization"/>
    <property type="evidence" value="ECO:0000318"/>
    <property type="project" value="GO_Central"/>
</dbReference>
<dbReference type="CDD" id="cd07610">
    <property type="entry name" value="FCH_F-BAR"/>
    <property type="match status" value="1"/>
</dbReference>
<dbReference type="CDD" id="cd00159">
    <property type="entry name" value="RhoGAP"/>
    <property type="match status" value="1"/>
</dbReference>
<dbReference type="FunFam" id="1.20.1270.60:FF:000060">
    <property type="entry name" value="Actin polymerization protein Bzz1"/>
    <property type="match status" value="1"/>
</dbReference>
<dbReference type="FunFam" id="1.10.555.10:FF:000162">
    <property type="entry name" value="Mental retardation GTPase activating protein homolog 1"/>
    <property type="match status" value="1"/>
</dbReference>
<dbReference type="Gene3D" id="1.20.1270.60">
    <property type="entry name" value="Arfaptin homology (AH) domain/BAR domain"/>
    <property type="match status" value="1"/>
</dbReference>
<dbReference type="Gene3D" id="1.10.555.10">
    <property type="entry name" value="Rho GTPase activation protein"/>
    <property type="match status" value="1"/>
</dbReference>
<dbReference type="InterPro" id="IPR027267">
    <property type="entry name" value="AH/BAR_dom_sf"/>
</dbReference>
<dbReference type="InterPro" id="IPR031160">
    <property type="entry name" value="F_BAR"/>
</dbReference>
<dbReference type="InterPro" id="IPR001060">
    <property type="entry name" value="FCH_dom"/>
</dbReference>
<dbReference type="InterPro" id="IPR008936">
    <property type="entry name" value="Rho_GTPase_activation_prot"/>
</dbReference>
<dbReference type="InterPro" id="IPR000198">
    <property type="entry name" value="RhoGAP_dom"/>
</dbReference>
<dbReference type="PANTHER" id="PTHR23065:SF25">
    <property type="entry name" value="GTPASE ACTIVATING PROTEIN HOMOLOG 1"/>
    <property type="match status" value="1"/>
</dbReference>
<dbReference type="PANTHER" id="PTHR23065">
    <property type="entry name" value="PROLINE-SERINE-THREONINE PHOSPHATASE INTERACTING PROTEIN 1"/>
    <property type="match status" value="1"/>
</dbReference>
<dbReference type="Pfam" id="PF00611">
    <property type="entry name" value="FCH"/>
    <property type="match status" value="1"/>
</dbReference>
<dbReference type="Pfam" id="PF00620">
    <property type="entry name" value="RhoGAP"/>
    <property type="match status" value="1"/>
</dbReference>
<dbReference type="SMART" id="SM00055">
    <property type="entry name" value="FCH"/>
    <property type="match status" value="1"/>
</dbReference>
<dbReference type="SMART" id="SM00324">
    <property type="entry name" value="RhoGAP"/>
    <property type="match status" value="1"/>
</dbReference>
<dbReference type="SUPFAM" id="SSF103657">
    <property type="entry name" value="BAR/IMD domain-like"/>
    <property type="match status" value="1"/>
</dbReference>
<dbReference type="SUPFAM" id="SSF48350">
    <property type="entry name" value="GTPase activation domain, GAP"/>
    <property type="match status" value="1"/>
</dbReference>
<dbReference type="PROSITE" id="PS51741">
    <property type="entry name" value="F_BAR"/>
    <property type="match status" value="1"/>
</dbReference>
<dbReference type="PROSITE" id="PS50238">
    <property type="entry name" value="RHOGAP"/>
    <property type="match status" value="1"/>
</dbReference>
<accession>Q54GD0</accession>